<accession>Q7V1E2</accession>
<gene>
    <name evidence="1" type="primary">ispE</name>
    <name type="ordered locus">PMM0932</name>
</gene>
<comment type="function">
    <text evidence="1">Catalyzes the phosphorylation of the position 2 hydroxy group of 4-diphosphocytidyl-2C-methyl-D-erythritol.</text>
</comment>
<comment type="catalytic activity">
    <reaction evidence="1">
        <text>4-CDP-2-C-methyl-D-erythritol + ATP = 4-CDP-2-C-methyl-D-erythritol 2-phosphate + ADP + H(+)</text>
        <dbReference type="Rhea" id="RHEA:18437"/>
        <dbReference type="ChEBI" id="CHEBI:15378"/>
        <dbReference type="ChEBI" id="CHEBI:30616"/>
        <dbReference type="ChEBI" id="CHEBI:57823"/>
        <dbReference type="ChEBI" id="CHEBI:57919"/>
        <dbReference type="ChEBI" id="CHEBI:456216"/>
        <dbReference type="EC" id="2.7.1.148"/>
    </reaction>
</comment>
<comment type="pathway">
    <text evidence="1">Isoprenoid biosynthesis; isopentenyl diphosphate biosynthesis via DXP pathway; isopentenyl diphosphate from 1-deoxy-D-xylulose 5-phosphate: step 3/6.</text>
</comment>
<comment type="similarity">
    <text evidence="1">Belongs to the GHMP kinase family. IspE subfamily.</text>
</comment>
<organism>
    <name type="scientific">Prochlorococcus marinus subsp. pastoris (strain CCMP1986 / NIES-2087 / MED4)</name>
    <dbReference type="NCBI Taxonomy" id="59919"/>
    <lineage>
        <taxon>Bacteria</taxon>
        <taxon>Bacillati</taxon>
        <taxon>Cyanobacteriota</taxon>
        <taxon>Cyanophyceae</taxon>
        <taxon>Synechococcales</taxon>
        <taxon>Prochlorococcaceae</taxon>
        <taxon>Prochlorococcus</taxon>
    </lineage>
</organism>
<keyword id="KW-0067">ATP-binding</keyword>
<keyword id="KW-0414">Isoprene biosynthesis</keyword>
<keyword id="KW-0418">Kinase</keyword>
<keyword id="KW-0547">Nucleotide-binding</keyword>
<keyword id="KW-0808">Transferase</keyword>
<protein>
    <recommendedName>
        <fullName evidence="1">4-diphosphocytidyl-2-C-methyl-D-erythritol kinase</fullName>
        <shortName evidence="1">CMK</shortName>
        <ecNumber evidence="1">2.7.1.148</ecNumber>
    </recommendedName>
    <alternativeName>
        <fullName evidence="1">4-(cytidine-5'-diphospho)-2-C-methyl-D-erythritol kinase</fullName>
    </alternativeName>
</protein>
<reference key="1">
    <citation type="journal article" date="2003" name="Nature">
        <title>Genome divergence in two Prochlorococcus ecotypes reflects oceanic niche differentiation.</title>
        <authorList>
            <person name="Rocap G."/>
            <person name="Larimer F.W."/>
            <person name="Lamerdin J.E."/>
            <person name="Malfatti S."/>
            <person name="Chain P."/>
            <person name="Ahlgren N.A."/>
            <person name="Arellano A."/>
            <person name="Coleman M."/>
            <person name="Hauser L."/>
            <person name="Hess W.R."/>
            <person name="Johnson Z.I."/>
            <person name="Land M.L."/>
            <person name="Lindell D."/>
            <person name="Post A.F."/>
            <person name="Regala W."/>
            <person name="Shah M."/>
            <person name="Shaw S.L."/>
            <person name="Steglich C."/>
            <person name="Sullivan M.B."/>
            <person name="Ting C.S."/>
            <person name="Tolonen A."/>
            <person name="Webb E.A."/>
            <person name="Zinser E.R."/>
            <person name="Chisholm S.W."/>
        </authorList>
    </citation>
    <scope>NUCLEOTIDE SEQUENCE [LARGE SCALE GENOMIC DNA]</scope>
    <source>
        <strain>CCMP1986 / NIES-2087 / MED4</strain>
    </source>
</reference>
<proteinExistence type="inferred from homology"/>
<name>ISPE_PROMP</name>
<feature type="chain" id="PRO_0000189248" description="4-diphosphocytidyl-2-C-methyl-D-erythritol kinase">
    <location>
        <begin position="1"/>
        <end position="312"/>
    </location>
</feature>
<feature type="active site" evidence="1">
    <location>
        <position position="16"/>
    </location>
</feature>
<feature type="active site" evidence="1">
    <location>
        <position position="143"/>
    </location>
</feature>
<feature type="binding site" evidence="1">
    <location>
        <begin position="101"/>
        <end position="111"/>
    </location>
    <ligand>
        <name>ATP</name>
        <dbReference type="ChEBI" id="CHEBI:30616"/>
    </ligand>
</feature>
<sequence>MSKLSTTKICVKSPAKINLHLEIIGKRKDGYHELAMIMQNIDLSDYIEFENNQIGEIKLKSNSKDLSLDEDNLIIKAANYIKDMSKNKELGANIFLKKNIPIGAGLAGGSSNAAATLVGLNKLWDLDLDYETIFILSAKLGSDVPFFIEGGCQFCFGRGEILEKYSSNFDFGVILLKNPNISISTVDTYKKYSQEFCPKYFTETEKTNKIRNDLRVNGFNDFKLSEQRINVKNDLQVIVERENNSVKKALYLLSNLQNCLSYSMSGSGPTCFALFKDINIANEVFEQNYKMFNNNGFEAWVCKLINSGITLL</sequence>
<dbReference type="EC" id="2.7.1.148" evidence="1"/>
<dbReference type="EMBL" id="BX548174">
    <property type="protein sequence ID" value="CAE19391.1"/>
    <property type="molecule type" value="Genomic_DNA"/>
</dbReference>
<dbReference type="RefSeq" id="WP_011132565.1">
    <property type="nucleotide sequence ID" value="NC_005072.1"/>
</dbReference>
<dbReference type="SMR" id="Q7V1E2"/>
<dbReference type="STRING" id="59919.PMM0932"/>
<dbReference type="KEGG" id="pmm:PMM0932"/>
<dbReference type="eggNOG" id="COG1947">
    <property type="taxonomic scope" value="Bacteria"/>
</dbReference>
<dbReference type="HOGENOM" id="CLU_053057_1_1_3"/>
<dbReference type="OrthoDB" id="9809438at2"/>
<dbReference type="UniPathway" id="UPA00056">
    <property type="reaction ID" value="UER00094"/>
</dbReference>
<dbReference type="Proteomes" id="UP000001026">
    <property type="component" value="Chromosome"/>
</dbReference>
<dbReference type="GO" id="GO:0050515">
    <property type="term" value="F:4-(cytidine 5'-diphospho)-2-C-methyl-D-erythritol kinase activity"/>
    <property type="evidence" value="ECO:0007669"/>
    <property type="project" value="UniProtKB-UniRule"/>
</dbReference>
<dbReference type="GO" id="GO:0005524">
    <property type="term" value="F:ATP binding"/>
    <property type="evidence" value="ECO:0007669"/>
    <property type="project" value="UniProtKB-UniRule"/>
</dbReference>
<dbReference type="GO" id="GO:0019288">
    <property type="term" value="P:isopentenyl diphosphate biosynthetic process, methylerythritol 4-phosphate pathway"/>
    <property type="evidence" value="ECO:0007669"/>
    <property type="project" value="UniProtKB-UniRule"/>
</dbReference>
<dbReference type="GO" id="GO:0016114">
    <property type="term" value="P:terpenoid biosynthetic process"/>
    <property type="evidence" value="ECO:0007669"/>
    <property type="project" value="InterPro"/>
</dbReference>
<dbReference type="Gene3D" id="3.30.230.10">
    <property type="match status" value="1"/>
</dbReference>
<dbReference type="Gene3D" id="3.30.70.890">
    <property type="entry name" value="GHMP kinase, C-terminal domain"/>
    <property type="match status" value="1"/>
</dbReference>
<dbReference type="HAMAP" id="MF_00061">
    <property type="entry name" value="IspE"/>
    <property type="match status" value="1"/>
</dbReference>
<dbReference type="InterPro" id="IPR013750">
    <property type="entry name" value="GHMP_kinase_C_dom"/>
</dbReference>
<dbReference type="InterPro" id="IPR036554">
    <property type="entry name" value="GHMP_kinase_C_sf"/>
</dbReference>
<dbReference type="InterPro" id="IPR006204">
    <property type="entry name" value="GHMP_kinase_N_dom"/>
</dbReference>
<dbReference type="InterPro" id="IPR004424">
    <property type="entry name" value="IspE"/>
</dbReference>
<dbReference type="InterPro" id="IPR020568">
    <property type="entry name" value="Ribosomal_Su5_D2-typ_SF"/>
</dbReference>
<dbReference type="InterPro" id="IPR014721">
    <property type="entry name" value="Ribsml_uS5_D2-typ_fold_subgr"/>
</dbReference>
<dbReference type="NCBIfam" id="TIGR00154">
    <property type="entry name" value="ispE"/>
    <property type="match status" value="1"/>
</dbReference>
<dbReference type="PANTHER" id="PTHR43527">
    <property type="entry name" value="4-DIPHOSPHOCYTIDYL-2-C-METHYL-D-ERYTHRITOL KINASE, CHLOROPLASTIC"/>
    <property type="match status" value="1"/>
</dbReference>
<dbReference type="PANTHER" id="PTHR43527:SF2">
    <property type="entry name" value="4-DIPHOSPHOCYTIDYL-2-C-METHYL-D-ERYTHRITOL KINASE, CHLOROPLASTIC"/>
    <property type="match status" value="1"/>
</dbReference>
<dbReference type="Pfam" id="PF08544">
    <property type="entry name" value="GHMP_kinases_C"/>
    <property type="match status" value="1"/>
</dbReference>
<dbReference type="Pfam" id="PF00288">
    <property type="entry name" value="GHMP_kinases_N"/>
    <property type="match status" value="1"/>
</dbReference>
<dbReference type="PIRSF" id="PIRSF010376">
    <property type="entry name" value="IspE"/>
    <property type="match status" value="1"/>
</dbReference>
<dbReference type="SUPFAM" id="SSF55060">
    <property type="entry name" value="GHMP Kinase, C-terminal domain"/>
    <property type="match status" value="1"/>
</dbReference>
<dbReference type="SUPFAM" id="SSF54211">
    <property type="entry name" value="Ribosomal protein S5 domain 2-like"/>
    <property type="match status" value="1"/>
</dbReference>
<evidence type="ECO:0000255" key="1">
    <source>
        <dbReference type="HAMAP-Rule" id="MF_00061"/>
    </source>
</evidence>